<accession>Q9IA05</accession>
<accession>Q9PTW2</accession>
<sequence>MERRGGGGRMLALLLAGLLGGARGFGDEEERRCDAIRIAMCQNLGYNVTKMPNLVGHELQADAELQLTTFTPLIQYGCSSQLQFFLCSVYVPMCTEKINIPIGPCGGMCLSVKRRCEPVLKEFGFAWPDSLNCSKFPPQNDHNHMCMEGPGDEEVPLHSKTSLQPGEECHSMGSNSDQYIWVKRNLDCVLKCGYDAGLYSRSAKEFTDIWMAVWASLCFISTAFTVLTFLIDSSRFSYPERPIIFLSMCYNIYSIAYIVRLTVGRERISCDFEEAAEPVLIQEGLKNTGCAIIFLLMYFFGMASSIWWVILTLTWFLAAGLKWGHEAIEMHSSYFHIAAWAIPAVKTIVILIMRLVDADELTGLCYVGNQNLDALTGFVVAPLFTYLVIGTLFIAAGLVALFKIRSNLQKDGTKTDKLERLMVKIGVFSVLYTVPATCVIACYFYEISNWAVFRYSADDSNMAVEMLKIFMSLLVGITSGMWIWSAKTLHTWQKCSNRLVNSGKVKREKRADGWVKPGKGNETVV</sequence>
<proteinExistence type="evidence at protein level"/>
<keyword id="KW-1003">Cell membrane</keyword>
<keyword id="KW-0217">Developmental protein</keyword>
<keyword id="KW-1015">Disulfide bond</keyword>
<keyword id="KW-0297">G-protein coupled receptor</keyword>
<keyword id="KW-0325">Glycoprotein</keyword>
<keyword id="KW-0472">Membrane</keyword>
<keyword id="KW-0675">Receptor</keyword>
<keyword id="KW-1185">Reference proteome</keyword>
<keyword id="KW-0732">Signal</keyword>
<keyword id="KW-0807">Transducer</keyword>
<keyword id="KW-0812">Transmembrane</keyword>
<keyword id="KW-1133">Transmembrane helix</keyword>
<keyword id="KW-0879">Wnt signaling pathway</keyword>
<gene>
    <name type="primary">FZD4</name>
    <name type="synonym">FZ4</name>
</gene>
<reference key="1">
    <citation type="journal article" date="2000" name="Mech. Dev.">
        <title>Characterization of avian frizzled genes in cranial placode development.</title>
        <authorList>
            <person name="Stark M.R."/>
            <person name="Biggs J.J."/>
            <person name="Schoenwolf G.C."/>
            <person name="Rao M.S."/>
        </authorList>
    </citation>
    <scope>NUCLEOTIDE SEQUENCE [MRNA]</scope>
</reference>
<reference key="2">
    <citation type="journal article" date="1999" name="Cell. Mol. Biol.">
        <title>Differential expression of the frizzled family involved in Wnt signaling during chick limb development.</title>
        <authorList>
            <person name="Nohno T."/>
            <person name="Kawakami Y."/>
            <person name="Wada N."/>
            <person name="Komaguchi C."/>
            <person name="Nishimatsu S."/>
        </authorList>
    </citation>
    <scope>NUCLEOTIDE SEQUENCE [MRNA] OF 123-310</scope>
    <source>
        <tissue>Limb bud</tissue>
    </source>
</reference>
<reference key="3">
    <citation type="journal article" date="2011" name="Proc. Natl. Acad. Sci. U.S.A.">
        <title>Tsukushi functions as a Wnt signaling inhibitor by competing with Wnt2b for binding to transmembrane protein Frizzled4.</title>
        <authorList>
            <person name="Ohta K."/>
            <person name="Ito A."/>
            <person name="Kuriyama S."/>
            <person name="Lupo G."/>
            <person name="Kosaka M."/>
            <person name="Ohnuma S."/>
            <person name="Nakagawa S."/>
            <person name="Tanaka H."/>
        </authorList>
    </citation>
    <scope>INTERACTION WITH TSKU</scope>
</reference>
<feature type="signal peptide" evidence="4">
    <location>
        <begin position="1"/>
        <end position="24"/>
    </location>
</feature>
<feature type="chain" id="PRO_0000012988" description="Frizzled-4">
    <location>
        <begin position="25"/>
        <end position="525"/>
    </location>
</feature>
<feature type="topological domain" description="Extracellular" evidence="3">
    <location>
        <begin position="25"/>
        <end position="200"/>
    </location>
</feature>
<feature type="transmembrane region" description="Helical; Name=1" evidence="3">
    <location>
        <begin position="201"/>
        <end position="231"/>
    </location>
</feature>
<feature type="topological domain" description="Cytoplasmic" evidence="3">
    <location>
        <begin position="232"/>
        <end position="237"/>
    </location>
</feature>
<feature type="transmembrane region" description="Helical; Name=2" evidence="3">
    <location>
        <begin position="238"/>
        <end position="263"/>
    </location>
</feature>
<feature type="topological domain" description="Extracellular" evidence="3">
    <location>
        <begin position="264"/>
        <end position="287"/>
    </location>
</feature>
<feature type="transmembrane region" description="Helical; Name=3" evidence="3">
    <location>
        <begin position="288"/>
        <end position="321"/>
    </location>
</feature>
<feature type="topological domain" description="Cytoplasmic" evidence="3">
    <location>
        <begin position="322"/>
        <end position="324"/>
    </location>
</feature>
<feature type="transmembrane region" description="Helical; Name=4" evidence="3">
    <location>
        <begin position="325"/>
        <end position="353"/>
    </location>
</feature>
<feature type="topological domain" description="Extracellular" evidence="3">
    <location>
        <begin position="354"/>
        <end position="371"/>
    </location>
</feature>
<feature type="transmembrane region" description="Helical; Name=5" evidence="3">
    <location>
        <begin position="372"/>
        <end position="406"/>
    </location>
</feature>
<feature type="topological domain" description="Cytoplasmic" evidence="3">
    <location>
        <begin position="407"/>
        <end position="419"/>
    </location>
</feature>
<feature type="transmembrane region" description="Helical; Name=6" evidence="3">
    <location>
        <begin position="420"/>
        <end position="448"/>
    </location>
</feature>
<feature type="topological domain" description="Extracellular" evidence="3">
    <location>
        <begin position="449"/>
        <end position="461"/>
    </location>
</feature>
<feature type="transmembrane region" description="Helical; Name=7" evidence="3">
    <location>
        <begin position="462"/>
        <end position="483"/>
    </location>
</feature>
<feature type="topological domain" description="Cytoplasmic" evidence="3">
    <location>
        <begin position="484"/>
        <end position="525"/>
    </location>
</feature>
<feature type="domain" description="FZ" evidence="5">
    <location>
        <begin position="28"/>
        <end position="149"/>
    </location>
</feature>
<feature type="short sequence motif" description="Lys-Thr-X-X-X-Trp motif, mediates interaction with the PDZ domain of Dvl family members" evidence="1">
    <location>
        <begin position="487"/>
        <end position="492"/>
    </location>
</feature>
<feature type="short sequence motif" description="PDZ-binding">
    <location>
        <begin position="523"/>
        <end position="525"/>
    </location>
</feature>
<feature type="glycosylation site" description="N-linked (GlcNAc...) asparagine" evidence="4">
    <location>
        <position position="47"/>
    </location>
</feature>
<feature type="glycosylation site" description="N-linked (GlcNAc...) asparagine" evidence="4">
    <location>
        <position position="132"/>
    </location>
</feature>
<feature type="disulfide bond" evidence="5">
    <location>
        <begin position="33"/>
        <end position="94"/>
    </location>
</feature>
<feature type="disulfide bond" evidence="5">
    <location>
        <begin position="41"/>
        <end position="87"/>
    </location>
</feature>
<feature type="disulfide bond" evidence="5">
    <location>
        <begin position="78"/>
        <end position="116"/>
    </location>
</feature>
<feature type="disulfide bond" evidence="5">
    <location>
        <begin position="105"/>
        <end position="146"/>
    </location>
</feature>
<feature type="disulfide bond" evidence="5">
    <location>
        <begin position="109"/>
        <end position="133"/>
    </location>
</feature>
<feature type="disulfide bond" evidence="3">
    <location>
        <begin position="169"/>
        <end position="188"/>
    </location>
</feature>
<feature type="disulfide bond" evidence="3">
    <location>
        <begin position="192"/>
        <end position="270"/>
    </location>
</feature>
<feature type="disulfide bond" evidence="3">
    <location>
        <begin position="290"/>
        <end position="365"/>
    </location>
</feature>
<dbReference type="EMBL" id="AF224316">
    <property type="protein sequence ID" value="AAF61096.1"/>
    <property type="molecule type" value="mRNA"/>
</dbReference>
<dbReference type="EMBL" id="AB029451">
    <property type="protein sequence ID" value="BAA89401.1"/>
    <property type="molecule type" value="mRNA"/>
</dbReference>
<dbReference type="RefSeq" id="NP_989430.1">
    <property type="nucleotide sequence ID" value="NM_204099.2"/>
</dbReference>
<dbReference type="SMR" id="Q9IA05"/>
<dbReference type="FunCoup" id="Q9IA05">
    <property type="interactions" value="144"/>
</dbReference>
<dbReference type="STRING" id="9031.ENSGALP00000027820"/>
<dbReference type="GlyCosmos" id="Q9IA05">
    <property type="glycosylation" value="2 sites, No reported glycans"/>
</dbReference>
<dbReference type="GlyGen" id="Q9IA05">
    <property type="glycosylation" value="2 sites"/>
</dbReference>
<dbReference type="PaxDb" id="9031-ENSGALP00000027820"/>
<dbReference type="Ensembl" id="ENSGALT00010018449.1">
    <property type="protein sequence ID" value="ENSGALP00010010101.1"/>
    <property type="gene ID" value="ENSGALG00010007763.1"/>
</dbReference>
<dbReference type="GeneID" id="373887"/>
<dbReference type="KEGG" id="gga:373887"/>
<dbReference type="CTD" id="8322"/>
<dbReference type="VEuPathDB" id="HostDB:geneid_373887"/>
<dbReference type="eggNOG" id="KOG3577">
    <property type="taxonomic scope" value="Eukaryota"/>
</dbReference>
<dbReference type="GeneTree" id="ENSGT00940000157141"/>
<dbReference type="HOGENOM" id="CLU_007873_2_1_1"/>
<dbReference type="InParanoid" id="Q9IA05"/>
<dbReference type="OMA" id="HWGEFRA"/>
<dbReference type="OrthoDB" id="5959102at2759"/>
<dbReference type="PhylomeDB" id="Q9IA05"/>
<dbReference type="TreeFam" id="TF317907"/>
<dbReference type="Reactome" id="R-GGA-4086398">
    <property type="pathway name" value="Ca2+ pathway"/>
</dbReference>
<dbReference type="Reactome" id="R-GGA-4641263">
    <property type="pathway name" value="Regulation of FZD by ubiquitination"/>
</dbReference>
<dbReference type="Reactome" id="R-GGA-5099900">
    <property type="pathway name" value="WNT5A-dependent internalization of FZD4"/>
</dbReference>
<dbReference type="PRO" id="PR:Q9IA05"/>
<dbReference type="Proteomes" id="UP000000539">
    <property type="component" value="Chromosome 1"/>
</dbReference>
<dbReference type="Bgee" id="ENSGALG00000017242">
    <property type="expression patterns" value="Expressed in liver and 13 other cell types or tissues"/>
</dbReference>
<dbReference type="GO" id="GO:0009986">
    <property type="term" value="C:cell surface"/>
    <property type="evidence" value="ECO:0000266"/>
    <property type="project" value="AgBase"/>
</dbReference>
<dbReference type="GO" id="GO:0005911">
    <property type="term" value="C:cell-cell junction"/>
    <property type="evidence" value="ECO:0000266"/>
    <property type="project" value="AgBase"/>
</dbReference>
<dbReference type="GO" id="GO:0005929">
    <property type="term" value="C:cilium"/>
    <property type="evidence" value="ECO:0007669"/>
    <property type="project" value="Ensembl"/>
</dbReference>
<dbReference type="GO" id="GO:0030425">
    <property type="term" value="C:dendrite"/>
    <property type="evidence" value="ECO:0007669"/>
    <property type="project" value="Ensembl"/>
</dbReference>
<dbReference type="GO" id="GO:0070062">
    <property type="term" value="C:extracellular exosome"/>
    <property type="evidence" value="ECO:0000266"/>
    <property type="project" value="AgBase"/>
</dbReference>
<dbReference type="GO" id="GO:0098978">
    <property type="term" value="C:glutamatergic synapse"/>
    <property type="evidence" value="ECO:0007669"/>
    <property type="project" value="Ensembl"/>
</dbReference>
<dbReference type="GO" id="GO:0005654">
    <property type="term" value="C:nucleoplasm"/>
    <property type="evidence" value="ECO:0007669"/>
    <property type="project" value="Ensembl"/>
</dbReference>
<dbReference type="GO" id="GO:0005886">
    <property type="term" value="C:plasma membrane"/>
    <property type="evidence" value="ECO:0000250"/>
    <property type="project" value="UniProtKB"/>
</dbReference>
<dbReference type="GO" id="GO:0001540">
    <property type="term" value="F:amyloid-beta binding"/>
    <property type="evidence" value="ECO:0007669"/>
    <property type="project" value="Ensembl"/>
</dbReference>
<dbReference type="GO" id="GO:0019955">
    <property type="term" value="F:cytokine binding"/>
    <property type="evidence" value="ECO:0000266"/>
    <property type="project" value="AgBase"/>
</dbReference>
<dbReference type="GO" id="GO:0004896">
    <property type="term" value="F:cytokine receptor activity"/>
    <property type="evidence" value="ECO:0007669"/>
    <property type="project" value="Ensembl"/>
</dbReference>
<dbReference type="GO" id="GO:0004930">
    <property type="term" value="F:G protein-coupled receptor activity"/>
    <property type="evidence" value="ECO:0007669"/>
    <property type="project" value="UniProtKB-KW"/>
</dbReference>
<dbReference type="GO" id="GO:0030165">
    <property type="term" value="F:PDZ domain binding"/>
    <property type="evidence" value="ECO:0000266"/>
    <property type="project" value="AgBase"/>
</dbReference>
<dbReference type="GO" id="GO:0046982">
    <property type="term" value="F:protein heterodimerization activity"/>
    <property type="evidence" value="ECO:0000266"/>
    <property type="project" value="AgBase"/>
</dbReference>
<dbReference type="GO" id="GO:0042803">
    <property type="term" value="F:protein homodimerization activity"/>
    <property type="evidence" value="ECO:0000266"/>
    <property type="project" value="AgBase"/>
</dbReference>
<dbReference type="GO" id="GO:0044877">
    <property type="term" value="F:protein-containing complex binding"/>
    <property type="evidence" value="ECO:0007669"/>
    <property type="project" value="Ensembl"/>
</dbReference>
<dbReference type="GO" id="GO:0031625">
    <property type="term" value="F:ubiquitin protein ligase binding"/>
    <property type="evidence" value="ECO:0000266"/>
    <property type="project" value="AgBase"/>
</dbReference>
<dbReference type="GO" id="GO:0042813">
    <property type="term" value="F:Wnt receptor activity"/>
    <property type="evidence" value="ECO:0000266"/>
    <property type="project" value="AgBase"/>
</dbReference>
<dbReference type="GO" id="GO:0017147">
    <property type="term" value="F:Wnt-protein binding"/>
    <property type="evidence" value="ECO:0000266"/>
    <property type="project" value="AgBase"/>
</dbReference>
<dbReference type="GO" id="GO:0001525">
    <property type="term" value="P:angiogenesis"/>
    <property type="evidence" value="ECO:0007669"/>
    <property type="project" value="Ensembl"/>
</dbReference>
<dbReference type="GO" id="GO:0001568">
    <property type="term" value="P:blood vessel development"/>
    <property type="evidence" value="ECO:0000266"/>
    <property type="project" value="AgBase"/>
</dbReference>
<dbReference type="GO" id="GO:0060070">
    <property type="term" value="P:canonical Wnt signaling pathway"/>
    <property type="evidence" value="ECO:0000266"/>
    <property type="project" value="AgBase"/>
</dbReference>
<dbReference type="GO" id="GO:0008283">
    <property type="term" value="P:cell population proliferation"/>
    <property type="evidence" value="ECO:0007669"/>
    <property type="project" value="Ensembl"/>
</dbReference>
<dbReference type="GO" id="GO:1990830">
    <property type="term" value="P:cellular response to leukemia inhibitory factor"/>
    <property type="evidence" value="ECO:0007669"/>
    <property type="project" value="Ensembl"/>
</dbReference>
<dbReference type="GO" id="GO:0061301">
    <property type="term" value="P:cerebellum vasculature morphogenesis"/>
    <property type="evidence" value="ECO:0000266"/>
    <property type="project" value="AgBase"/>
</dbReference>
<dbReference type="GO" id="GO:0045446">
    <property type="term" value="P:endothelial cell differentiation"/>
    <property type="evidence" value="ECO:0007669"/>
    <property type="project" value="Ensembl"/>
</dbReference>
<dbReference type="GO" id="GO:0060856">
    <property type="term" value="P:establishment of blood-brain barrier"/>
    <property type="evidence" value="ECO:0007669"/>
    <property type="project" value="Ensembl"/>
</dbReference>
<dbReference type="GO" id="GO:0035426">
    <property type="term" value="P:extracellular matrix-cell signaling"/>
    <property type="evidence" value="ECO:0000266"/>
    <property type="project" value="AgBase"/>
</dbReference>
<dbReference type="GO" id="GO:0031987">
    <property type="term" value="P:locomotion involved in locomotory behavior"/>
    <property type="evidence" value="ECO:0000266"/>
    <property type="project" value="AgBase"/>
</dbReference>
<dbReference type="GO" id="GO:0001553">
    <property type="term" value="P:luteinization"/>
    <property type="evidence" value="ECO:0000266"/>
    <property type="project" value="AgBase"/>
</dbReference>
<dbReference type="GO" id="GO:0010812">
    <property type="term" value="P:negative regulation of cell-substrate adhesion"/>
    <property type="evidence" value="ECO:0000266"/>
    <property type="project" value="AgBase"/>
</dbReference>
<dbReference type="GO" id="GO:0035567">
    <property type="term" value="P:non-canonical Wnt signaling pathway"/>
    <property type="evidence" value="ECO:0000318"/>
    <property type="project" value="GO_Central"/>
</dbReference>
<dbReference type="GO" id="GO:0110135">
    <property type="term" value="P:Norrin signaling pathway"/>
    <property type="evidence" value="ECO:0007669"/>
    <property type="project" value="Ensembl"/>
</dbReference>
<dbReference type="GO" id="GO:0030335">
    <property type="term" value="P:positive regulation of cell migration"/>
    <property type="evidence" value="ECO:0007669"/>
    <property type="project" value="Ensembl"/>
</dbReference>
<dbReference type="GO" id="GO:0051091">
    <property type="term" value="P:positive regulation of DNA-binding transcription factor activity"/>
    <property type="evidence" value="ECO:0000266"/>
    <property type="project" value="AgBase"/>
</dbReference>
<dbReference type="GO" id="GO:0045893">
    <property type="term" value="P:positive regulation of DNA-templated transcription"/>
    <property type="evidence" value="ECO:0000266"/>
    <property type="project" value="AgBase"/>
</dbReference>
<dbReference type="GO" id="GO:0043507">
    <property type="term" value="P:positive regulation of JUN kinase activity"/>
    <property type="evidence" value="ECO:0000266"/>
    <property type="project" value="AgBase"/>
</dbReference>
<dbReference type="GO" id="GO:0150012">
    <property type="term" value="P:positive regulation of neuron projection arborization"/>
    <property type="evidence" value="ECO:0007669"/>
    <property type="project" value="Ensembl"/>
</dbReference>
<dbReference type="GO" id="GO:0045944">
    <property type="term" value="P:positive regulation of transcription by RNA polymerase II"/>
    <property type="evidence" value="ECO:0007669"/>
    <property type="project" value="Ensembl"/>
</dbReference>
<dbReference type="GO" id="GO:0042701">
    <property type="term" value="P:progesterone secretion"/>
    <property type="evidence" value="ECO:0000266"/>
    <property type="project" value="AgBase"/>
</dbReference>
<dbReference type="GO" id="GO:0030947">
    <property type="term" value="P:regulation of vascular endothelial growth factor receptor signaling pathway"/>
    <property type="evidence" value="ECO:0000266"/>
    <property type="project" value="AgBase"/>
</dbReference>
<dbReference type="GO" id="GO:0001666">
    <property type="term" value="P:response to hypoxia"/>
    <property type="evidence" value="ECO:0007669"/>
    <property type="project" value="Ensembl"/>
</dbReference>
<dbReference type="GO" id="GO:0061299">
    <property type="term" value="P:retina vasculature morphogenesis in camera-type eye"/>
    <property type="evidence" value="ECO:0000318"/>
    <property type="project" value="GO_Central"/>
</dbReference>
<dbReference type="GO" id="GO:0061304">
    <property type="term" value="P:retinal blood vessel morphogenesis"/>
    <property type="evidence" value="ECO:0007669"/>
    <property type="project" value="Ensembl"/>
</dbReference>
<dbReference type="GO" id="GO:0007605">
    <property type="term" value="P:sensory perception of sound"/>
    <property type="evidence" value="ECO:0000266"/>
    <property type="project" value="AgBase"/>
</dbReference>
<dbReference type="GO" id="GO:0034446">
    <property type="term" value="P:substrate adhesion-dependent cell spreading"/>
    <property type="evidence" value="ECO:0000266"/>
    <property type="project" value="AgBase"/>
</dbReference>
<dbReference type="GO" id="GO:0001570">
    <property type="term" value="P:vasculogenesis"/>
    <property type="evidence" value="ECO:0000266"/>
    <property type="project" value="AgBase"/>
</dbReference>
<dbReference type="GO" id="GO:0016055">
    <property type="term" value="P:Wnt signaling pathway"/>
    <property type="evidence" value="ECO:0000266"/>
    <property type="project" value="AgBase"/>
</dbReference>
<dbReference type="GO" id="GO:0007223">
    <property type="term" value="P:Wnt signaling pathway, calcium modulating pathway"/>
    <property type="evidence" value="ECO:0000266"/>
    <property type="project" value="AgBase"/>
</dbReference>
<dbReference type="CDD" id="cd15038">
    <property type="entry name" value="7tmF_FZD4"/>
    <property type="match status" value="1"/>
</dbReference>
<dbReference type="CDD" id="cd07448">
    <property type="entry name" value="CRD_FZ4"/>
    <property type="match status" value="1"/>
</dbReference>
<dbReference type="FunFam" id="1.20.1070.10:FF:000020">
    <property type="entry name" value="Frizzled class receptor 10"/>
    <property type="match status" value="1"/>
</dbReference>
<dbReference type="FunFam" id="1.10.2000.10:FF:000008">
    <property type="entry name" value="Frizzled receptor 4"/>
    <property type="match status" value="1"/>
</dbReference>
<dbReference type="Gene3D" id="1.10.2000.10">
    <property type="entry name" value="Frizzled cysteine-rich domain"/>
    <property type="match status" value="1"/>
</dbReference>
<dbReference type="Gene3D" id="1.20.1070.10">
    <property type="entry name" value="Rhodopsin 7-helix transmembrane proteins"/>
    <property type="match status" value="1"/>
</dbReference>
<dbReference type="InterPro" id="IPR015526">
    <property type="entry name" value="Frizzled/SFRP"/>
</dbReference>
<dbReference type="InterPro" id="IPR000539">
    <property type="entry name" value="Frizzled/Smoothened_7TM"/>
</dbReference>
<dbReference type="InterPro" id="IPR020067">
    <property type="entry name" value="Frizzled_dom"/>
</dbReference>
<dbReference type="InterPro" id="IPR036790">
    <property type="entry name" value="Frizzled_dom_sf"/>
</dbReference>
<dbReference type="InterPro" id="IPR041765">
    <property type="entry name" value="FZ4_CRD"/>
</dbReference>
<dbReference type="InterPro" id="IPR026551">
    <property type="entry name" value="FZD4_7TM"/>
</dbReference>
<dbReference type="InterPro" id="IPR017981">
    <property type="entry name" value="GPCR_2-like_7TM"/>
</dbReference>
<dbReference type="PANTHER" id="PTHR11309">
    <property type="entry name" value="FRIZZLED"/>
    <property type="match status" value="1"/>
</dbReference>
<dbReference type="PANTHER" id="PTHR11309:SF23">
    <property type="entry name" value="FRIZZLED-4"/>
    <property type="match status" value="1"/>
</dbReference>
<dbReference type="Pfam" id="PF01534">
    <property type="entry name" value="Frizzled"/>
    <property type="match status" value="1"/>
</dbReference>
<dbReference type="Pfam" id="PF01392">
    <property type="entry name" value="Fz"/>
    <property type="match status" value="1"/>
</dbReference>
<dbReference type="PRINTS" id="PR00489">
    <property type="entry name" value="FRIZZLED"/>
</dbReference>
<dbReference type="SMART" id="SM00063">
    <property type="entry name" value="FRI"/>
    <property type="match status" value="1"/>
</dbReference>
<dbReference type="SMART" id="SM01330">
    <property type="entry name" value="Frizzled"/>
    <property type="match status" value="1"/>
</dbReference>
<dbReference type="SUPFAM" id="SSF63501">
    <property type="entry name" value="Frizzled cysteine-rich domain"/>
    <property type="match status" value="1"/>
</dbReference>
<dbReference type="PROSITE" id="PS50038">
    <property type="entry name" value="FZ"/>
    <property type="match status" value="1"/>
</dbReference>
<dbReference type="PROSITE" id="PS50261">
    <property type="entry name" value="G_PROTEIN_RECEP_F2_4"/>
    <property type="match status" value="1"/>
</dbReference>
<organism>
    <name type="scientific">Gallus gallus</name>
    <name type="common">Chicken</name>
    <dbReference type="NCBI Taxonomy" id="9031"/>
    <lineage>
        <taxon>Eukaryota</taxon>
        <taxon>Metazoa</taxon>
        <taxon>Chordata</taxon>
        <taxon>Craniata</taxon>
        <taxon>Vertebrata</taxon>
        <taxon>Euteleostomi</taxon>
        <taxon>Archelosauria</taxon>
        <taxon>Archosauria</taxon>
        <taxon>Dinosauria</taxon>
        <taxon>Saurischia</taxon>
        <taxon>Theropoda</taxon>
        <taxon>Coelurosauria</taxon>
        <taxon>Aves</taxon>
        <taxon>Neognathae</taxon>
        <taxon>Galloanserae</taxon>
        <taxon>Galliformes</taxon>
        <taxon>Phasianidae</taxon>
        <taxon>Phasianinae</taxon>
        <taxon>Gallus</taxon>
    </lineage>
</organism>
<name>FZD4_CHICK</name>
<protein>
    <recommendedName>
        <fullName>Frizzled-4</fullName>
        <shortName>Fz-4</shortName>
        <shortName>cFz-4</shortName>
    </recommendedName>
</protein>
<evidence type="ECO:0000250" key="1"/>
<evidence type="ECO:0000250" key="2">
    <source>
        <dbReference type="UniProtKB" id="Q61088"/>
    </source>
</evidence>
<evidence type="ECO:0000250" key="3">
    <source>
        <dbReference type="UniProtKB" id="Q9ULV1"/>
    </source>
</evidence>
<evidence type="ECO:0000255" key="4"/>
<evidence type="ECO:0000255" key="5">
    <source>
        <dbReference type="PROSITE-ProRule" id="PRU00090"/>
    </source>
</evidence>
<evidence type="ECO:0000269" key="6">
    <source>
    </source>
</evidence>
<evidence type="ECO:0000305" key="7"/>
<comment type="function">
    <text evidence="2 3">Receptor for Wnt proteins (By similarity). Most frizzled receptors are coupled to the beta-catenin canonical signaling pathway, which leads to the activation of disheveled proteins, inhibition of GSK-3 kinase, nuclear accumulation of beta-catenin and activation of Wnt target genes (By similarity). A second signaling pathway involving PKC and calcium fluxes has been seen for some family members, but it is not yet clear if it represents a distinct pathway or if it can be integrated in the canonical pathway, as PKC seems to be required for Wnt-mediated inactivation of GSK-3 kinase (By similarity). Both pathways seem to involve interactions with G-proteins (By similarity). May be involved in transduction and intercellular transmission of polarity information during tissue morphogenesis and/or in differentiated tissues (By similarity).</text>
</comment>
<comment type="subunit">
    <text evidence="6">Interacts (via FZ domain) with TSKU; TSKU competes with WNT2B for binding to FZD4, inhibiting Wnt signaling and repressing peripheral eye development.</text>
</comment>
<comment type="subcellular location">
    <subcellularLocation>
        <location evidence="3">Cell membrane</location>
        <topology evidence="4">Multi-pass membrane protein</topology>
    </subcellularLocation>
</comment>
<comment type="tissue specificity">
    <text>Expressed in the developing kidney, interdigital spaces and optic cup.</text>
</comment>
<comment type="developmental stage">
    <text>Expressed in optic cup at stages 10-19 and in nephric tubules from stage 10 to 20 and more. Expression in interdigital space begins at stage 20.</text>
</comment>
<comment type="domain">
    <text evidence="1">Lys-Thr-X-X-X-Trp motif interacts with the PDZ domain of Dvl (Disheveled) family members and is involved in the activation of the Wnt/beta-catenin signaling pathway.</text>
</comment>
<comment type="domain">
    <text evidence="1">The FZ domain is involved in binding with Wnt ligands.</text>
</comment>
<comment type="similarity">
    <text evidence="7">Belongs to the G-protein coupled receptor Fz/Smo family.</text>
</comment>